<keyword id="KW-0028">Amino-acid biosynthesis</keyword>
<keyword id="KW-0963">Cytoplasm</keyword>
<keyword id="KW-0554">One-carbon metabolism</keyword>
<keyword id="KW-0663">Pyridoxal phosphate</keyword>
<keyword id="KW-0808">Transferase</keyword>
<feature type="chain" id="PRO_0000234978" description="Serine hydroxymethyltransferase">
    <location>
        <begin position="1"/>
        <end position="421"/>
    </location>
</feature>
<feature type="binding site" evidence="1">
    <location>
        <position position="123"/>
    </location>
    <ligand>
        <name>(6S)-5,6,7,8-tetrahydrofolate</name>
        <dbReference type="ChEBI" id="CHEBI:57453"/>
    </ligand>
</feature>
<feature type="binding site" evidence="1">
    <location>
        <begin position="127"/>
        <end position="129"/>
    </location>
    <ligand>
        <name>(6S)-5,6,7,8-tetrahydrofolate</name>
        <dbReference type="ChEBI" id="CHEBI:57453"/>
    </ligand>
</feature>
<feature type="site" description="Plays an important role in substrate specificity" evidence="1">
    <location>
        <position position="231"/>
    </location>
</feature>
<feature type="modified residue" description="N6-(pyridoxal phosphate)lysine" evidence="1">
    <location>
        <position position="232"/>
    </location>
</feature>
<sequence>MVRYISDYDLQDVDTEVFKCITDESNRQNSQLQLIASENFVSKAVLQAQGSIFTNKYAEGYPGKRYYCGCHFADIIENIAIERLCKLFGCKFANVQPHSGSQANQGVFAALLKPGDTVIGMSLDCGGHLTHGSAPSISGKWFNAVQYQVDRDTGMIDMDAIEKLALSHNPSLIIAGSSSYPRTIDFKRFREIADKVGAYLLADIAHYAGLVAAGEFPSPIEYAHVITSTTHKTLRGPRGAVIMTNHEDIYKKIQSSIFPGMQGGPLMHVIAARAVAFGEALKPEFKDYAKQIIKNSKTLVKVFQERGLNVVTGGTDSHMVVVDLRPKSVTGKDAVLALERLGIICNKNAIPFDPEKPFVTSGLRFGSAAETSRGLQEPEFEKIGHMVCDVIDSLKTTDDVRLSIEQDVIRRVKELTDTFKV</sequence>
<dbReference type="EC" id="2.1.2.1" evidence="1"/>
<dbReference type="EMBL" id="CR767821">
    <property type="protein sequence ID" value="CAH58416.1"/>
    <property type="molecule type" value="Genomic_DNA"/>
</dbReference>
<dbReference type="EMBL" id="CR925678">
    <property type="protein sequence ID" value="CAI27213.1"/>
    <property type="molecule type" value="Genomic_DNA"/>
</dbReference>
<dbReference type="RefSeq" id="WP_011155363.1">
    <property type="nucleotide sequence ID" value="NC_005295.2"/>
</dbReference>
<dbReference type="SMR" id="Q5HAJ7"/>
<dbReference type="GeneID" id="33058115"/>
<dbReference type="KEGG" id="eru:Erum6840"/>
<dbReference type="KEGG" id="erw:ERWE_CDS_07190"/>
<dbReference type="eggNOG" id="COG0112">
    <property type="taxonomic scope" value="Bacteria"/>
</dbReference>
<dbReference type="HOGENOM" id="CLU_022477_2_1_5"/>
<dbReference type="UniPathway" id="UPA00193"/>
<dbReference type="UniPathway" id="UPA00288">
    <property type="reaction ID" value="UER01023"/>
</dbReference>
<dbReference type="Proteomes" id="UP000001021">
    <property type="component" value="Chromosome"/>
</dbReference>
<dbReference type="GO" id="GO:0005829">
    <property type="term" value="C:cytosol"/>
    <property type="evidence" value="ECO:0007669"/>
    <property type="project" value="TreeGrafter"/>
</dbReference>
<dbReference type="GO" id="GO:0004372">
    <property type="term" value="F:glycine hydroxymethyltransferase activity"/>
    <property type="evidence" value="ECO:0007669"/>
    <property type="project" value="UniProtKB-UniRule"/>
</dbReference>
<dbReference type="GO" id="GO:0030170">
    <property type="term" value="F:pyridoxal phosphate binding"/>
    <property type="evidence" value="ECO:0007669"/>
    <property type="project" value="UniProtKB-UniRule"/>
</dbReference>
<dbReference type="GO" id="GO:0019264">
    <property type="term" value="P:glycine biosynthetic process from serine"/>
    <property type="evidence" value="ECO:0007669"/>
    <property type="project" value="UniProtKB-UniRule"/>
</dbReference>
<dbReference type="GO" id="GO:0035999">
    <property type="term" value="P:tetrahydrofolate interconversion"/>
    <property type="evidence" value="ECO:0007669"/>
    <property type="project" value="UniProtKB-UniRule"/>
</dbReference>
<dbReference type="CDD" id="cd00378">
    <property type="entry name" value="SHMT"/>
    <property type="match status" value="1"/>
</dbReference>
<dbReference type="FunFam" id="3.40.640.10:FF:000001">
    <property type="entry name" value="Serine hydroxymethyltransferase"/>
    <property type="match status" value="1"/>
</dbReference>
<dbReference type="Gene3D" id="3.90.1150.10">
    <property type="entry name" value="Aspartate Aminotransferase, domain 1"/>
    <property type="match status" value="1"/>
</dbReference>
<dbReference type="Gene3D" id="3.40.640.10">
    <property type="entry name" value="Type I PLP-dependent aspartate aminotransferase-like (Major domain)"/>
    <property type="match status" value="1"/>
</dbReference>
<dbReference type="HAMAP" id="MF_00051">
    <property type="entry name" value="SHMT"/>
    <property type="match status" value="1"/>
</dbReference>
<dbReference type="InterPro" id="IPR015424">
    <property type="entry name" value="PyrdxlP-dep_Trfase"/>
</dbReference>
<dbReference type="InterPro" id="IPR015421">
    <property type="entry name" value="PyrdxlP-dep_Trfase_major"/>
</dbReference>
<dbReference type="InterPro" id="IPR015422">
    <property type="entry name" value="PyrdxlP-dep_Trfase_small"/>
</dbReference>
<dbReference type="InterPro" id="IPR001085">
    <property type="entry name" value="Ser_HO-MeTrfase"/>
</dbReference>
<dbReference type="InterPro" id="IPR049943">
    <property type="entry name" value="Ser_HO-MeTrfase-like"/>
</dbReference>
<dbReference type="InterPro" id="IPR019798">
    <property type="entry name" value="Ser_HO-MeTrfase_PLP_BS"/>
</dbReference>
<dbReference type="InterPro" id="IPR039429">
    <property type="entry name" value="SHMT-like_dom"/>
</dbReference>
<dbReference type="NCBIfam" id="NF000586">
    <property type="entry name" value="PRK00011.1"/>
    <property type="match status" value="1"/>
</dbReference>
<dbReference type="PANTHER" id="PTHR11680">
    <property type="entry name" value="SERINE HYDROXYMETHYLTRANSFERASE"/>
    <property type="match status" value="1"/>
</dbReference>
<dbReference type="PANTHER" id="PTHR11680:SF35">
    <property type="entry name" value="SERINE HYDROXYMETHYLTRANSFERASE 1"/>
    <property type="match status" value="1"/>
</dbReference>
<dbReference type="Pfam" id="PF00464">
    <property type="entry name" value="SHMT"/>
    <property type="match status" value="1"/>
</dbReference>
<dbReference type="PIRSF" id="PIRSF000412">
    <property type="entry name" value="SHMT"/>
    <property type="match status" value="1"/>
</dbReference>
<dbReference type="SUPFAM" id="SSF53383">
    <property type="entry name" value="PLP-dependent transferases"/>
    <property type="match status" value="1"/>
</dbReference>
<dbReference type="PROSITE" id="PS00096">
    <property type="entry name" value="SHMT"/>
    <property type="match status" value="1"/>
</dbReference>
<evidence type="ECO:0000255" key="1">
    <source>
        <dbReference type="HAMAP-Rule" id="MF_00051"/>
    </source>
</evidence>
<name>GLYA_EHRRW</name>
<reference key="1">
    <citation type="journal article" date="2005" name="Proc. Natl. Acad. Sci. U.S.A.">
        <title>The genome of the heartwater agent Ehrlichia ruminantium contains multiple tandem repeats of actively variable copy number.</title>
        <authorList>
            <person name="Collins N.E."/>
            <person name="Liebenberg J."/>
            <person name="de Villiers E.P."/>
            <person name="Brayton K.A."/>
            <person name="Louw E."/>
            <person name="Pretorius A."/>
            <person name="Faber F.E."/>
            <person name="van Heerden H."/>
            <person name="Josemans A."/>
            <person name="van Kleef M."/>
            <person name="Steyn H.C."/>
            <person name="van Strijp M.F."/>
            <person name="Zweygarth E."/>
            <person name="Jongejan F."/>
            <person name="Maillard J.C."/>
            <person name="Berthier D."/>
            <person name="Botha M."/>
            <person name="Joubert F."/>
            <person name="Corton C.H."/>
            <person name="Thomson N.R."/>
            <person name="Allsopp M.T."/>
            <person name="Allsopp B.A."/>
        </authorList>
    </citation>
    <scope>NUCLEOTIDE SEQUENCE [LARGE SCALE GENOMIC DNA]</scope>
    <source>
        <strain>Welgevonden</strain>
    </source>
</reference>
<reference key="2">
    <citation type="journal article" date="2006" name="J. Bacteriol.">
        <title>Comparative genomic analysis of three strains of Ehrlichia ruminantium reveals an active process of genome size plasticity.</title>
        <authorList>
            <person name="Frutos R."/>
            <person name="Viari A."/>
            <person name="Ferraz C."/>
            <person name="Morgat A."/>
            <person name="Eychenie S."/>
            <person name="Kandassamy Y."/>
            <person name="Chantal I."/>
            <person name="Bensaid A."/>
            <person name="Coissac E."/>
            <person name="Vachiery N."/>
            <person name="Demaille J."/>
            <person name="Martinez D."/>
        </authorList>
    </citation>
    <scope>NUCLEOTIDE SEQUENCE [LARGE SCALE GENOMIC DNA]</scope>
    <source>
        <strain>Welgevonden</strain>
    </source>
</reference>
<comment type="function">
    <text evidence="1">Catalyzes the reversible interconversion of serine and glycine with tetrahydrofolate (THF) serving as the one-carbon carrier. This reaction serves as the major source of one-carbon groups required for the biosynthesis of purines, thymidylate, methionine, and other important biomolecules. Also exhibits THF-independent aldolase activity toward beta-hydroxyamino acids, producing glycine and aldehydes, via a retro-aldol mechanism.</text>
</comment>
<comment type="catalytic activity">
    <reaction evidence="1">
        <text>(6R)-5,10-methylene-5,6,7,8-tetrahydrofolate + glycine + H2O = (6S)-5,6,7,8-tetrahydrofolate + L-serine</text>
        <dbReference type="Rhea" id="RHEA:15481"/>
        <dbReference type="ChEBI" id="CHEBI:15377"/>
        <dbReference type="ChEBI" id="CHEBI:15636"/>
        <dbReference type="ChEBI" id="CHEBI:33384"/>
        <dbReference type="ChEBI" id="CHEBI:57305"/>
        <dbReference type="ChEBI" id="CHEBI:57453"/>
        <dbReference type="EC" id="2.1.2.1"/>
    </reaction>
</comment>
<comment type="cofactor">
    <cofactor evidence="1">
        <name>pyridoxal 5'-phosphate</name>
        <dbReference type="ChEBI" id="CHEBI:597326"/>
    </cofactor>
</comment>
<comment type="pathway">
    <text evidence="1">One-carbon metabolism; tetrahydrofolate interconversion.</text>
</comment>
<comment type="pathway">
    <text evidence="1">Amino-acid biosynthesis; glycine biosynthesis; glycine from L-serine: step 1/1.</text>
</comment>
<comment type="subunit">
    <text evidence="1">Homodimer.</text>
</comment>
<comment type="subcellular location">
    <subcellularLocation>
        <location evidence="1">Cytoplasm</location>
    </subcellularLocation>
</comment>
<comment type="similarity">
    <text evidence="1">Belongs to the SHMT family.</text>
</comment>
<proteinExistence type="inferred from homology"/>
<protein>
    <recommendedName>
        <fullName evidence="1">Serine hydroxymethyltransferase</fullName>
        <shortName evidence="1">SHMT</shortName>
        <shortName evidence="1">Serine methylase</shortName>
        <ecNumber evidence="1">2.1.2.1</ecNumber>
    </recommendedName>
</protein>
<gene>
    <name evidence="1" type="primary">glyA</name>
    <name type="ordered locus">Erum6840</name>
    <name type="ordered locus">ERWE_CDS_07190</name>
</gene>
<organism>
    <name type="scientific">Ehrlichia ruminantium (strain Welgevonden)</name>
    <dbReference type="NCBI Taxonomy" id="254945"/>
    <lineage>
        <taxon>Bacteria</taxon>
        <taxon>Pseudomonadati</taxon>
        <taxon>Pseudomonadota</taxon>
        <taxon>Alphaproteobacteria</taxon>
        <taxon>Rickettsiales</taxon>
        <taxon>Anaplasmataceae</taxon>
        <taxon>Ehrlichia</taxon>
    </lineage>
</organism>
<accession>Q5HAJ7</accession>
<accession>Q5FDE9</accession>